<gene>
    <name type="primary">ATG12</name>
    <name type="ORF">PGUG_03606</name>
</gene>
<dbReference type="EMBL" id="CH408158">
    <property type="protein sequence ID" value="EDK39509.2"/>
    <property type="molecule type" value="Genomic_DNA"/>
</dbReference>
<dbReference type="RefSeq" id="XP_001484226.1">
    <property type="nucleotide sequence ID" value="XM_001484176.1"/>
</dbReference>
<dbReference type="SMR" id="A5DK05"/>
<dbReference type="FunCoup" id="A5DK05">
    <property type="interactions" value="165"/>
</dbReference>
<dbReference type="STRING" id="294746.A5DK05"/>
<dbReference type="GeneID" id="5125814"/>
<dbReference type="KEGG" id="pgu:PGUG_03606"/>
<dbReference type="VEuPathDB" id="FungiDB:PGUG_03606"/>
<dbReference type="eggNOG" id="KOG3439">
    <property type="taxonomic scope" value="Eukaryota"/>
</dbReference>
<dbReference type="HOGENOM" id="CLU_106795_0_1_1"/>
<dbReference type="InParanoid" id="A5DK05"/>
<dbReference type="OMA" id="DLPMNMS"/>
<dbReference type="OrthoDB" id="10003551at2759"/>
<dbReference type="Proteomes" id="UP000001997">
    <property type="component" value="Unassembled WGS sequence"/>
</dbReference>
<dbReference type="GO" id="GO:0034274">
    <property type="term" value="C:Atg12-Atg5-Atg16 complex"/>
    <property type="evidence" value="ECO:0007669"/>
    <property type="project" value="TreeGrafter"/>
</dbReference>
<dbReference type="GO" id="GO:0000421">
    <property type="term" value="C:autophagosome membrane"/>
    <property type="evidence" value="ECO:0007669"/>
    <property type="project" value="TreeGrafter"/>
</dbReference>
<dbReference type="GO" id="GO:0034045">
    <property type="term" value="C:phagophore assembly site membrane"/>
    <property type="evidence" value="ECO:0007669"/>
    <property type="project" value="UniProtKB-SubCell"/>
</dbReference>
<dbReference type="GO" id="GO:0019776">
    <property type="term" value="F:Atg8-family ligase activity"/>
    <property type="evidence" value="ECO:0007669"/>
    <property type="project" value="TreeGrafter"/>
</dbReference>
<dbReference type="GO" id="GO:0000045">
    <property type="term" value="P:autophagosome assembly"/>
    <property type="evidence" value="ECO:0007669"/>
    <property type="project" value="InterPro"/>
</dbReference>
<dbReference type="GO" id="GO:0097352">
    <property type="term" value="P:autophagosome maturation"/>
    <property type="evidence" value="ECO:0007669"/>
    <property type="project" value="TreeGrafter"/>
</dbReference>
<dbReference type="GO" id="GO:0000422">
    <property type="term" value="P:autophagy of mitochondrion"/>
    <property type="evidence" value="ECO:0007669"/>
    <property type="project" value="TreeGrafter"/>
</dbReference>
<dbReference type="GO" id="GO:0061723">
    <property type="term" value="P:glycophagy"/>
    <property type="evidence" value="ECO:0007669"/>
    <property type="project" value="TreeGrafter"/>
</dbReference>
<dbReference type="GO" id="GO:0034727">
    <property type="term" value="P:piecemeal microautophagy of the nucleus"/>
    <property type="evidence" value="ECO:0007669"/>
    <property type="project" value="TreeGrafter"/>
</dbReference>
<dbReference type="GO" id="GO:0015031">
    <property type="term" value="P:protein transport"/>
    <property type="evidence" value="ECO:0007669"/>
    <property type="project" value="UniProtKB-KW"/>
</dbReference>
<dbReference type="CDD" id="cd01612">
    <property type="entry name" value="Ubl_ATG12"/>
    <property type="match status" value="1"/>
</dbReference>
<dbReference type="Gene3D" id="3.10.20.90">
    <property type="entry name" value="Phosphatidylinositol 3-kinase Catalytic Subunit, Chain A, domain 1"/>
    <property type="match status" value="1"/>
</dbReference>
<dbReference type="InterPro" id="IPR007242">
    <property type="entry name" value="Atg12"/>
</dbReference>
<dbReference type="InterPro" id="IPR029071">
    <property type="entry name" value="Ubiquitin-like_domsf"/>
</dbReference>
<dbReference type="PANTHER" id="PTHR13385">
    <property type="entry name" value="AUTOPHAGY PROTEIN 12"/>
    <property type="match status" value="1"/>
</dbReference>
<dbReference type="PANTHER" id="PTHR13385:SF0">
    <property type="entry name" value="UBIQUITIN-LIKE PROTEIN ATG12"/>
    <property type="match status" value="1"/>
</dbReference>
<dbReference type="Pfam" id="PF04110">
    <property type="entry name" value="APG12"/>
    <property type="match status" value="1"/>
</dbReference>
<dbReference type="SUPFAM" id="SSF54236">
    <property type="entry name" value="Ubiquitin-like"/>
    <property type="match status" value="1"/>
</dbReference>
<keyword id="KW-0072">Autophagy</keyword>
<keyword id="KW-1017">Isopeptide bond</keyword>
<keyword id="KW-0472">Membrane</keyword>
<keyword id="KW-0653">Protein transport</keyword>
<keyword id="KW-1185">Reference proteome</keyword>
<keyword id="KW-0813">Transport</keyword>
<keyword id="KW-0833">Ubl conjugation pathway</keyword>
<sequence length="213" mass="23830">MTPPTSNSSMVDSLSSWVAESLSSDMRNNYSTSVGKGRAKLACGFYQERWCIDALQKVVSINEILCGMSFIHSEPDSDSSTTSADSNTLSQHVDKTSVPLDTSIVVKRLPEVEQRQWHKTIKPLPATKITIRLVPIGSTRAITPKVLQVSSDQTVAVLMRFIAKKLRISTDSVYMYIHNTFQPTPDERLGDLYDQFRTNQELIFNYCNTVAFG</sequence>
<comment type="function">
    <text evidence="1">Ubiquitin-like protein involved in cytoplasm to vacuole transport (Cvt), autophagy vesicles formation, mitophagy, and nucleophagy. Conjugation with ATG5 through a ubiquitin-like conjugating system involving also ATG7 as an E1-like activating enzyme and ATG10 as an E2-like conjugating enzyme, is essential for its function. The ATG12-ATG5 conjugate functions as an E3-like enzyme which is required for lipidation of ATG8 and ATG8 association to the vesicle membranes (By similarity).</text>
</comment>
<comment type="subunit">
    <text evidence="1">Forms a conjugate with ATG5.</text>
</comment>
<comment type="subcellular location">
    <subcellularLocation>
        <location evidence="1">Preautophagosomal structure membrane</location>
        <topology evidence="1">Peripheral membrane protein</topology>
    </subcellularLocation>
</comment>
<comment type="similarity">
    <text evidence="2">Belongs to the ATG12 family.</text>
</comment>
<protein>
    <recommendedName>
        <fullName>Ubiquitin-like protein ATG12</fullName>
    </recommendedName>
    <alternativeName>
        <fullName>Autophagy-related protein 12</fullName>
    </alternativeName>
</protein>
<accession>A5DK05</accession>
<feature type="chain" id="PRO_0000317939" description="Ubiquitin-like protein ATG12">
    <location>
        <begin position="1"/>
        <end position="213"/>
    </location>
</feature>
<feature type="cross-link" description="Glycyl lysine isopeptide (Gly-Lys) (interchain with K-125 in ATG5)" evidence="1">
    <location>
        <position position="213"/>
    </location>
</feature>
<proteinExistence type="inferred from homology"/>
<reference key="1">
    <citation type="journal article" date="2009" name="Nature">
        <title>Evolution of pathogenicity and sexual reproduction in eight Candida genomes.</title>
        <authorList>
            <person name="Butler G."/>
            <person name="Rasmussen M.D."/>
            <person name="Lin M.F."/>
            <person name="Santos M.A.S."/>
            <person name="Sakthikumar S."/>
            <person name="Munro C.A."/>
            <person name="Rheinbay E."/>
            <person name="Grabherr M."/>
            <person name="Forche A."/>
            <person name="Reedy J.L."/>
            <person name="Agrafioti I."/>
            <person name="Arnaud M.B."/>
            <person name="Bates S."/>
            <person name="Brown A.J.P."/>
            <person name="Brunke S."/>
            <person name="Costanzo M.C."/>
            <person name="Fitzpatrick D.A."/>
            <person name="de Groot P.W.J."/>
            <person name="Harris D."/>
            <person name="Hoyer L.L."/>
            <person name="Hube B."/>
            <person name="Klis F.M."/>
            <person name="Kodira C."/>
            <person name="Lennard N."/>
            <person name="Logue M.E."/>
            <person name="Martin R."/>
            <person name="Neiman A.M."/>
            <person name="Nikolaou E."/>
            <person name="Quail M.A."/>
            <person name="Quinn J."/>
            <person name="Santos M.C."/>
            <person name="Schmitzberger F.F."/>
            <person name="Sherlock G."/>
            <person name="Shah P."/>
            <person name="Silverstein K.A.T."/>
            <person name="Skrzypek M.S."/>
            <person name="Soll D."/>
            <person name="Staggs R."/>
            <person name="Stansfield I."/>
            <person name="Stumpf M.P.H."/>
            <person name="Sudbery P.E."/>
            <person name="Srikantha T."/>
            <person name="Zeng Q."/>
            <person name="Berman J."/>
            <person name="Berriman M."/>
            <person name="Heitman J."/>
            <person name="Gow N.A.R."/>
            <person name="Lorenz M.C."/>
            <person name="Birren B.W."/>
            <person name="Kellis M."/>
            <person name="Cuomo C.A."/>
        </authorList>
    </citation>
    <scope>NUCLEOTIDE SEQUENCE [LARGE SCALE GENOMIC DNA]</scope>
    <source>
        <strain>ATCC 6260 / CBS 566 / DSM 6381 / JCM 1539 / NBRC 10279 / NRRL Y-324</strain>
    </source>
</reference>
<evidence type="ECO:0000250" key="1"/>
<evidence type="ECO:0000305" key="2"/>
<organism>
    <name type="scientific">Meyerozyma guilliermondii (strain ATCC 6260 / CBS 566 / DSM 6381 / JCM 1539 / NBRC 10279 / NRRL Y-324)</name>
    <name type="common">Yeast</name>
    <name type="synonym">Candida guilliermondii</name>
    <dbReference type="NCBI Taxonomy" id="294746"/>
    <lineage>
        <taxon>Eukaryota</taxon>
        <taxon>Fungi</taxon>
        <taxon>Dikarya</taxon>
        <taxon>Ascomycota</taxon>
        <taxon>Saccharomycotina</taxon>
        <taxon>Pichiomycetes</taxon>
        <taxon>Debaryomycetaceae</taxon>
        <taxon>Meyerozyma</taxon>
    </lineage>
</organism>
<name>ATG12_PICGU</name>